<feature type="transit peptide" description="Mitochondrion" evidence="2">
    <location>
        <begin position="1"/>
        <end position="11"/>
    </location>
</feature>
<feature type="chain" id="PRO_0000333677" description="Mitochondrial distribution and morphology protein 32">
    <location>
        <begin position="12"/>
        <end position="577"/>
    </location>
</feature>
<feature type="topological domain" description="Mitochondrial matrix" evidence="2">
    <location>
        <begin position="12"/>
        <end position="115"/>
    </location>
</feature>
<feature type="transmembrane region" description="Helical" evidence="2">
    <location>
        <begin position="116"/>
        <end position="136"/>
    </location>
</feature>
<feature type="topological domain" description="Mitochondrial intermembrane" evidence="2">
    <location>
        <begin position="137"/>
        <end position="556"/>
    </location>
</feature>
<feature type="transmembrane region" description="Helical" evidence="2">
    <location>
        <begin position="557"/>
        <end position="577"/>
    </location>
</feature>
<evidence type="ECO:0000250" key="1"/>
<evidence type="ECO:0000255" key="2"/>
<evidence type="ECO:0000305" key="3"/>
<comment type="function">
    <text evidence="1">Involved in the organization of the mitochondrial membranes and the global structure of the mitochondria. Also required for mitochondrial distribution and mobility as well as for the maintenance of mitochondrial DNA nucleoids structures (By similarity).</text>
</comment>
<comment type="subcellular location">
    <subcellularLocation>
        <location evidence="1">Mitochondrion inner membrane</location>
        <topology evidence="1">Multi-pass membrane protein</topology>
    </subcellularLocation>
</comment>
<comment type="similarity">
    <text evidence="3">Belongs to the MDM31/MDM32 family.</text>
</comment>
<reference key="1">
    <citation type="journal article" date="2004" name="Science">
        <title>The Ashbya gossypii genome as a tool for mapping the ancient Saccharomyces cerevisiae genome.</title>
        <authorList>
            <person name="Dietrich F.S."/>
            <person name="Voegeli S."/>
            <person name="Brachat S."/>
            <person name="Lerch A."/>
            <person name="Gates K."/>
            <person name="Steiner S."/>
            <person name="Mohr C."/>
            <person name="Poehlmann R."/>
            <person name="Luedi P."/>
            <person name="Choi S."/>
            <person name="Wing R.A."/>
            <person name="Flavier A."/>
            <person name="Gaffney T.D."/>
            <person name="Philippsen P."/>
        </authorList>
    </citation>
    <scope>NUCLEOTIDE SEQUENCE [LARGE SCALE GENOMIC DNA]</scope>
    <source>
        <strain>ATCC 10895 / CBS 109.51 / FGSC 9923 / NRRL Y-1056</strain>
    </source>
</reference>
<reference key="2">
    <citation type="journal article" date="2013" name="G3 (Bethesda)">
        <title>Genomes of Ashbya fungi isolated from insects reveal four mating-type loci, numerous translocations, lack of transposons, and distinct gene duplications.</title>
        <authorList>
            <person name="Dietrich F.S."/>
            <person name="Voegeli S."/>
            <person name="Kuo S."/>
            <person name="Philippsen P."/>
        </authorList>
    </citation>
    <scope>GENOME REANNOTATION</scope>
    <source>
        <strain>ATCC 10895 / CBS 109.51 / FGSC 9923 / NRRL Y-1056</strain>
    </source>
</reference>
<organism>
    <name type="scientific">Eremothecium gossypii (strain ATCC 10895 / CBS 109.51 / FGSC 9923 / NRRL Y-1056)</name>
    <name type="common">Yeast</name>
    <name type="synonym">Ashbya gossypii</name>
    <dbReference type="NCBI Taxonomy" id="284811"/>
    <lineage>
        <taxon>Eukaryota</taxon>
        <taxon>Fungi</taxon>
        <taxon>Dikarya</taxon>
        <taxon>Ascomycota</taxon>
        <taxon>Saccharomycotina</taxon>
        <taxon>Saccharomycetes</taxon>
        <taxon>Saccharomycetales</taxon>
        <taxon>Saccharomycetaceae</taxon>
        <taxon>Eremothecium</taxon>
    </lineage>
</organism>
<name>MDM32_EREGS</name>
<protein>
    <recommendedName>
        <fullName>Mitochondrial distribution and morphology protein 32</fullName>
    </recommendedName>
</protein>
<gene>
    <name type="primary">MDM32</name>
    <name type="ordered locus">AFR391W</name>
</gene>
<proteinExistence type="inferred from homology"/>
<dbReference type="EMBL" id="AE016819">
    <property type="protein sequence ID" value="AAS53762.1"/>
    <property type="molecule type" value="Genomic_DNA"/>
</dbReference>
<dbReference type="RefSeq" id="NP_985938.1">
    <property type="nucleotide sequence ID" value="NM_211293.1"/>
</dbReference>
<dbReference type="FunCoup" id="Q753C5">
    <property type="interactions" value="51"/>
</dbReference>
<dbReference type="STRING" id="284811.Q753C5"/>
<dbReference type="EnsemblFungi" id="AAS53762">
    <property type="protein sequence ID" value="AAS53762"/>
    <property type="gene ID" value="AGOS_AFR391W"/>
</dbReference>
<dbReference type="GeneID" id="4622210"/>
<dbReference type="KEGG" id="ago:AGOS_AFR391W"/>
<dbReference type="eggNOG" id="ENOG502QQU5">
    <property type="taxonomic scope" value="Eukaryota"/>
</dbReference>
<dbReference type="HOGENOM" id="CLU_016236_3_0_1"/>
<dbReference type="InParanoid" id="Q753C5"/>
<dbReference type="OMA" id="FAKEMVG"/>
<dbReference type="OrthoDB" id="17678at2759"/>
<dbReference type="Proteomes" id="UP000000591">
    <property type="component" value="Chromosome VI"/>
</dbReference>
<dbReference type="GO" id="GO:0005743">
    <property type="term" value="C:mitochondrial inner membrane"/>
    <property type="evidence" value="ECO:0000318"/>
    <property type="project" value="GO_Central"/>
</dbReference>
<dbReference type="GO" id="GO:0006873">
    <property type="term" value="P:intracellular monoatomic ion homeostasis"/>
    <property type="evidence" value="ECO:0007669"/>
    <property type="project" value="EnsemblFungi"/>
</dbReference>
<dbReference type="GO" id="GO:0000001">
    <property type="term" value="P:mitochondrion inheritance"/>
    <property type="evidence" value="ECO:0007669"/>
    <property type="project" value="EnsemblFungi"/>
</dbReference>
<dbReference type="GO" id="GO:0007005">
    <property type="term" value="P:mitochondrion organization"/>
    <property type="evidence" value="ECO:0000318"/>
    <property type="project" value="GO_Central"/>
</dbReference>
<dbReference type="InterPro" id="IPR012571">
    <property type="entry name" value="Mdm31/Mdm32"/>
</dbReference>
<dbReference type="PANTHER" id="PTHR31068">
    <property type="entry name" value="MITOCHONDRIAL DISTRIBUTION AND MORPHOLOGY PROTEIN 31"/>
    <property type="match status" value="1"/>
</dbReference>
<dbReference type="PANTHER" id="PTHR31068:SF1">
    <property type="entry name" value="MITOCHONDRIAL DISTRIBUTION AND MORPHOLOGY PROTEIN 32"/>
    <property type="match status" value="1"/>
</dbReference>
<dbReference type="Pfam" id="PF08118">
    <property type="entry name" value="MDM31_MDM32"/>
    <property type="match status" value="2"/>
</dbReference>
<keyword id="KW-0472">Membrane</keyword>
<keyword id="KW-0496">Mitochondrion</keyword>
<keyword id="KW-0999">Mitochondrion inner membrane</keyword>
<keyword id="KW-1185">Reference proteome</keyword>
<keyword id="KW-0809">Transit peptide</keyword>
<keyword id="KW-0812">Transmembrane</keyword>
<keyword id="KW-1133">Transmembrane helix</keyword>
<sequence length="577" mass="66127">MLPVLRSGLRRAVWRCGHGLLQRRIAAGAGWYARACASDDAASRSPLKQEMLNSTEYLHVQNILLQKNQQRMTKQKLLSEATGFYDRFKINTKWLLIRGNRPFSGEEISTLLSWLILSQVLWVILGTTTFVSLLLFLANTVLAKEMVGKFVGNSLNRYMDGVDVQFQDAMVPEWRKGQISFQKVRLRTTPGAQDAGLLTFDLMFSKLSLTLSVRKWLQGRGLINDVYVSGMKGDVSVGAAERKDAKLIDFFSNPNYELGEVEVCDSVIMCTDQEIGQKFRVSIYNMRMSQLRFRWSLLDLFNADVVSGALNHSLFSIHKRQHKLPLHEMEKDMAPWKRISRLRLNPISVKDLGLDKSNAFNWIEGGSVEMIADLMLPNIYPESAAAEDENKYVVMDLRITFKDLIASMNTVPPALSNGRELISFDELKPIIMFVNNRRGLFSSLRNLDNNKLWRPTVTIERQQSYPDTTVIPMRTFQWPEGEGSVQLNQEIIKYHENPSDNSNEIILRCRIAKHMNELQNTFLFKETDVYDKMALELYTDLMKMIEETEYKKKNDWVKLLGTTFASQLLIFGLGAMV</sequence>
<accession>Q753C5</accession>